<evidence type="ECO:0000255" key="1">
    <source>
        <dbReference type="HAMAP-Rule" id="MF_00031"/>
    </source>
</evidence>
<protein>
    <recommendedName>
        <fullName evidence="1">Holliday junction branch migration complex subunit RuvA</fullName>
    </recommendedName>
</protein>
<sequence length="190" mass="20009">MIGRISGQLAEKNPPEVLVDCNGVGYEVLVPMSTFYNLPGLGEKVSLLTHFVVREDAQILYGFGSATERAAFRQLIKISGVGPRTALSVLSGMSVEELAQAVTHQEAGRIIKVPGIGKKTAERLLLELKGKLGADIGVQVSVSSDSQSDILQALVALGYSDRDAALALKALPKDIGVSDGIKLALKALAK</sequence>
<reference key="1">
    <citation type="journal article" date="2008" name="Appl. Environ. Microbiol.">
        <title>The genome of Polaromonas sp. strain JS666: insights into the evolution of a hydrocarbon- and xenobiotic-degrading bacterium, and features of relevance to biotechnology.</title>
        <authorList>
            <person name="Mattes T.E."/>
            <person name="Alexander A.K."/>
            <person name="Richardson P.M."/>
            <person name="Munk A.C."/>
            <person name="Han C.S."/>
            <person name="Stothard P."/>
            <person name="Coleman N.V."/>
        </authorList>
    </citation>
    <scope>NUCLEOTIDE SEQUENCE [LARGE SCALE GENOMIC DNA]</scope>
    <source>
        <strain>JS666 / ATCC BAA-500</strain>
    </source>
</reference>
<proteinExistence type="inferred from homology"/>
<feature type="chain" id="PRO_1000002511" description="Holliday junction branch migration complex subunit RuvA">
    <location>
        <begin position="1"/>
        <end position="190"/>
    </location>
</feature>
<feature type="region of interest" description="Domain I" evidence="1">
    <location>
        <begin position="1"/>
        <end position="64"/>
    </location>
</feature>
<feature type="region of interest" description="Domain II" evidence="1">
    <location>
        <begin position="65"/>
        <end position="137"/>
    </location>
</feature>
<feature type="region of interest" description="Flexible linker" evidence="1">
    <location>
        <begin position="137"/>
        <end position="141"/>
    </location>
</feature>
<feature type="region of interest" description="Domain III" evidence="1">
    <location>
        <begin position="142"/>
        <end position="190"/>
    </location>
</feature>
<accession>Q124Q5</accession>
<keyword id="KW-0963">Cytoplasm</keyword>
<keyword id="KW-0227">DNA damage</keyword>
<keyword id="KW-0233">DNA recombination</keyword>
<keyword id="KW-0234">DNA repair</keyword>
<keyword id="KW-0238">DNA-binding</keyword>
<keyword id="KW-1185">Reference proteome</keyword>
<dbReference type="EMBL" id="CP000316">
    <property type="protein sequence ID" value="ABE45987.1"/>
    <property type="molecule type" value="Genomic_DNA"/>
</dbReference>
<dbReference type="RefSeq" id="WP_011484977.1">
    <property type="nucleotide sequence ID" value="NC_007948.1"/>
</dbReference>
<dbReference type="SMR" id="Q124Q5"/>
<dbReference type="STRING" id="296591.Bpro_4094"/>
<dbReference type="KEGG" id="pol:Bpro_4094"/>
<dbReference type="eggNOG" id="COG0632">
    <property type="taxonomic scope" value="Bacteria"/>
</dbReference>
<dbReference type="HOGENOM" id="CLU_087936_0_0_4"/>
<dbReference type="OrthoDB" id="5293449at2"/>
<dbReference type="Proteomes" id="UP000001983">
    <property type="component" value="Chromosome"/>
</dbReference>
<dbReference type="GO" id="GO:0005737">
    <property type="term" value="C:cytoplasm"/>
    <property type="evidence" value="ECO:0007669"/>
    <property type="project" value="UniProtKB-SubCell"/>
</dbReference>
<dbReference type="GO" id="GO:0009379">
    <property type="term" value="C:Holliday junction helicase complex"/>
    <property type="evidence" value="ECO:0007669"/>
    <property type="project" value="InterPro"/>
</dbReference>
<dbReference type="GO" id="GO:0048476">
    <property type="term" value="C:Holliday junction resolvase complex"/>
    <property type="evidence" value="ECO:0007669"/>
    <property type="project" value="UniProtKB-UniRule"/>
</dbReference>
<dbReference type="GO" id="GO:0005524">
    <property type="term" value="F:ATP binding"/>
    <property type="evidence" value="ECO:0007669"/>
    <property type="project" value="InterPro"/>
</dbReference>
<dbReference type="GO" id="GO:0000400">
    <property type="term" value="F:four-way junction DNA binding"/>
    <property type="evidence" value="ECO:0007669"/>
    <property type="project" value="UniProtKB-UniRule"/>
</dbReference>
<dbReference type="GO" id="GO:0009378">
    <property type="term" value="F:four-way junction helicase activity"/>
    <property type="evidence" value="ECO:0007669"/>
    <property type="project" value="InterPro"/>
</dbReference>
<dbReference type="GO" id="GO:0006310">
    <property type="term" value="P:DNA recombination"/>
    <property type="evidence" value="ECO:0007669"/>
    <property type="project" value="UniProtKB-UniRule"/>
</dbReference>
<dbReference type="GO" id="GO:0006281">
    <property type="term" value="P:DNA repair"/>
    <property type="evidence" value="ECO:0007669"/>
    <property type="project" value="UniProtKB-UniRule"/>
</dbReference>
<dbReference type="CDD" id="cd14332">
    <property type="entry name" value="UBA_RuvA_C"/>
    <property type="match status" value="1"/>
</dbReference>
<dbReference type="Gene3D" id="1.10.150.20">
    <property type="entry name" value="5' to 3' exonuclease, C-terminal subdomain"/>
    <property type="match status" value="1"/>
</dbReference>
<dbReference type="Gene3D" id="1.10.8.10">
    <property type="entry name" value="DNA helicase RuvA subunit, C-terminal domain"/>
    <property type="match status" value="1"/>
</dbReference>
<dbReference type="Gene3D" id="2.40.50.140">
    <property type="entry name" value="Nucleic acid-binding proteins"/>
    <property type="match status" value="1"/>
</dbReference>
<dbReference type="HAMAP" id="MF_00031">
    <property type="entry name" value="DNA_HJ_migration_RuvA"/>
    <property type="match status" value="1"/>
</dbReference>
<dbReference type="InterPro" id="IPR013849">
    <property type="entry name" value="DNA_helicase_Holl-junc_RuvA_I"/>
</dbReference>
<dbReference type="InterPro" id="IPR003583">
    <property type="entry name" value="Hlx-hairpin-Hlx_DNA-bd_motif"/>
</dbReference>
<dbReference type="InterPro" id="IPR012340">
    <property type="entry name" value="NA-bd_OB-fold"/>
</dbReference>
<dbReference type="InterPro" id="IPR000085">
    <property type="entry name" value="RuvA"/>
</dbReference>
<dbReference type="InterPro" id="IPR010994">
    <property type="entry name" value="RuvA_2-like"/>
</dbReference>
<dbReference type="InterPro" id="IPR011114">
    <property type="entry name" value="RuvA_C"/>
</dbReference>
<dbReference type="InterPro" id="IPR036267">
    <property type="entry name" value="RuvA_C_sf"/>
</dbReference>
<dbReference type="NCBIfam" id="TIGR00084">
    <property type="entry name" value="ruvA"/>
    <property type="match status" value="1"/>
</dbReference>
<dbReference type="Pfam" id="PF14520">
    <property type="entry name" value="HHH_5"/>
    <property type="match status" value="1"/>
</dbReference>
<dbReference type="Pfam" id="PF07499">
    <property type="entry name" value="RuvA_C"/>
    <property type="match status" value="1"/>
</dbReference>
<dbReference type="Pfam" id="PF01330">
    <property type="entry name" value="RuvA_N"/>
    <property type="match status" value="1"/>
</dbReference>
<dbReference type="SMART" id="SM00278">
    <property type="entry name" value="HhH1"/>
    <property type="match status" value="2"/>
</dbReference>
<dbReference type="SUPFAM" id="SSF46929">
    <property type="entry name" value="DNA helicase RuvA subunit, C-terminal domain"/>
    <property type="match status" value="1"/>
</dbReference>
<dbReference type="SUPFAM" id="SSF50249">
    <property type="entry name" value="Nucleic acid-binding proteins"/>
    <property type="match status" value="1"/>
</dbReference>
<dbReference type="SUPFAM" id="SSF47781">
    <property type="entry name" value="RuvA domain 2-like"/>
    <property type="match status" value="1"/>
</dbReference>
<gene>
    <name evidence="1" type="primary">ruvA</name>
    <name type="ordered locus">Bpro_4094</name>
</gene>
<organism>
    <name type="scientific">Polaromonas sp. (strain JS666 / ATCC BAA-500)</name>
    <dbReference type="NCBI Taxonomy" id="296591"/>
    <lineage>
        <taxon>Bacteria</taxon>
        <taxon>Pseudomonadati</taxon>
        <taxon>Pseudomonadota</taxon>
        <taxon>Betaproteobacteria</taxon>
        <taxon>Burkholderiales</taxon>
        <taxon>Comamonadaceae</taxon>
        <taxon>Polaromonas</taxon>
    </lineage>
</organism>
<name>RUVA_POLSJ</name>
<comment type="function">
    <text evidence="1">The RuvA-RuvB-RuvC complex processes Holliday junction (HJ) DNA during genetic recombination and DNA repair, while the RuvA-RuvB complex plays an important role in the rescue of blocked DNA replication forks via replication fork reversal (RFR). RuvA specifically binds to HJ cruciform DNA, conferring on it an open structure. The RuvB hexamer acts as an ATP-dependent pump, pulling dsDNA into and through the RuvAB complex. HJ branch migration allows RuvC to scan DNA until it finds its consensus sequence, where it cleaves and resolves the cruciform DNA.</text>
</comment>
<comment type="subunit">
    <text evidence="1">Homotetramer. Forms an RuvA(8)-RuvB(12)-Holliday junction (HJ) complex. HJ DNA is sandwiched between 2 RuvA tetramers; dsDNA enters through RuvA and exits via RuvB. An RuvB hexamer assembles on each DNA strand where it exits the tetramer. Each RuvB hexamer is contacted by two RuvA subunits (via domain III) on 2 adjacent RuvB subunits; this complex drives branch migration. In the full resolvosome a probable DNA-RuvA(4)-RuvB(12)-RuvC(2) complex forms which resolves the HJ.</text>
</comment>
<comment type="subcellular location">
    <subcellularLocation>
        <location evidence="1">Cytoplasm</location>
    </subcellularLocation>
</comment>
<comment type="domain">
    <text evidence="1">Has three domains with a flexible linker between the domains II and III and assumes an 'L' shape. Domain III is highly mobile and contacts RuvB.</text>
</comment>
<comment type="similarity">
    <text evidence="1">Belongs to the RuvA family.</text>
</comment>